<feature type="chain" id="PRO_0000084588" description="Nuclear valosin-containing protein-like">
    <location>
        <begin position="1"/>
        <end position="856"/>
    </location>
</feature>
<feature type="region of interest" description="Interaction with RPL5" evidence="4">
    <location>
        <begin position="1"/>
        <end position="220"/>
    </location>
</feature>
<feature type="region of interest" description="Disordered" evidence="2">
    <location>
        <begin position="84"/>
        <end position="175"/>
    </location>
</feature>
<feature type="region of interest" description="Disordered" evidence="2">
    <location>
        <begin position="197"/>
        <end position="236"/>
    </location>
</feature>
<feature type="region of interest" description="Interaction with WDR74" evidence="10">
    <location>
        <begin position="267"/>
        <end position="474"/>
    </location>
</feature>
<feature type="region of interest" description="Disordered" evidence="2">
    <location>
        <begin position="496"/>
        <end position="523"/>
    </location>
</feature>
<feature type="short sequence motif" description="Nucleolar localization signal" evidence="4">
    <location>
        <begin position="49"/>
        <end position="52"/>
    </location>
</feature>
<feature type="short sequence motif" description="Nuclear localization signal" evidence="4">
    <location>
        <begin position="85"/>
        <end position="88"/>
    </location>
</feature>
<feature type="short sequence motif" description="Nuclear localization signal" evidence="4">
    <location>
        <begin position="218"/>
        <end position="232"/>
    </location>
</feature>
<feature type="compositionally biased region" description="Acidic residues" evidence="2">
    <location>
        <begin position="92"/>
        <end position="111"/>
    </location>
</feature>
<feature type="compositionally biased region" description="Polar residues" evidence="2">
    <location>
        <begin position="114"/>
        <end position="124"/>
    </location>
</feature>
<feature type="compositionally biased region" description="Polar residues" evidence="2">
    <location>
        <begin position="133"/>
        <end position="158"/>
    </location>
</feature>
<feature type="compositionally biased region" description="Basic and acidic residues" evidence="2">
    <location>
        <begin position="205"/>
        <end position="218"/>
    </location>
</feature>
<feature type="compositionally biased region" description="Basic residues" evidence="2">
    <location>
        <begin position="219"/>
        <end position="230"/>
    </location>
</feature>
<feature type="binding site" evidence="19">
    <location>
        <begin position="305"/>
        <end position="312"/>
    </location>
    <ligand>
        <name>ATP</name>
        <dbReference type="ChEBI" id="CHEBI:30616"/>
    </ligand>
</feature>
<feature type="binding site" evidence="19">
    <location>
        <begin position="622"/>
        <end position="629"/>
    </location>
    <ligand>
        <name>ATP</name>
        <dbReference type="ChEBI" id="CHEBI:30616"/>
    </ligand>
</feature>
<feature type="modified residue" description="N6-acetyllysine" evidence="1">
    <location>
        <position position="70"/>
    </location>
</feature>
<feature type="modified residue" description="Phosphoserine" evidence="22 23 25">
    <location>
        <position position="134"/>
    </location>
</feature>
<feature type="modified residue" description="Phosphothreonine" evidence="22 23 25">
    <location>
        <position position="138"/>
    </location>
</feature>
<feature type="modified residue" description="N6-acetyllysine" evidence="1">
    <location>
        <position position="156"/>
    </location>
</feature>
<feature type="modified residue" description="Phosphoserine" evidence="1">
    <location>
        <position position="191"/>
    </location>
</feature>
<feature type="modified residue" description="Phosphoserine" evidence="23 24">
    <location>
        <position position="211"/>
    </location>
</feature>
<feature type="modified residue" description="Phosphoserine" evidence="23">
    <location>
        <position position="215"/>
    </location>
</feature>
<feature type="cross-link" description="Glycyl lysine isopeptide (Lys-Gly) (interchain with G-Cter in SUMO2)" evidence="26">
    <location>
        <position position="208"/>
    </location>
</feature>
<feature type="splice variant" id="VSP_045334" description="In isoform 4." evidence="14">
    <location>
        <begin position="1"/>
        <end position="216"/>
    </location>
</feature>
<feature type="splice variant" id="VSP_007771" description="In isoform 2 and isoform 3." evidence="15 17">
    <location>
        <begin position="1"/>
        <end position="106"/>
    </location>
</feature>
<feature type="splice variant" id="VSP_007772" description="In isoform 3 and isoform 5." evidence="14 15">
    <location>
        <begin position="115"/>
        <end position="205"/>
    </location>
</feature>
<feature type="splice variant" id="VSP_045335" description="In isoform 4." evidence="14">
    <original>G</original>
    <variation>GAECSGMITAHCSFDFSGSNDPPASASQ</variation>
    <location>
        <position position="320"/>
    </location>
</feature>
<feature type="sequence variant" id="VAR_048109" description="In dbSNP:rs12084919.">
    <original>V</original>
    <variation>I</variation>
    <location>
        <position position="295"/>
    </location>
</feature>
<feature type="sequence variant" id="VAR_015890" evidence="13">
    <original>C</original>
    <variation>G</variation>
    <location>
        <position position="359"/>
    </location>
</feature>
<feature type="sequence variant" id="VAR_048110" description="In dbSNP:rs34631151.">
    <original>V</original>
    <variation>I</variation>
    <location>
        <position position="404"/>
    </location>
</feature>
<feature type="mutagenesis site" description="Loss of nucleolar localization and interaction with RPL5." evidence="4">
    <original>KR</original>
    <variation>AA</variation>
    <location>
        <begin position="51"/>
        <end position="52"/>
    </location>
</feature>
<feature type="mutagenesis site" description="Decreased nuclear localization. Complete loss of nuclear localization; when associated with 218-A--A-220 and 230-A--A-232." evidence="4">
    <original>KR</original>
    <variation>AA</variation>
    <location>
        <begin position="85"/>
        <end position="86"/>
    </location>
</feature>
<feature type="mutagenesis site" description="Abolishes binding to MTREX." evidence="12">
    <original>W</original>
    <variation>A</variation>
    <location>
        <position position="173"/>
    </location>
</feature>
<feature type="mutagenesis site" description="Impairs binding to MTREX." evidence="12">
    <original>I</original>
    <variation>E</variation>
    <location>
        <position position="175"/>
    </location>
</feature>
<feature type="mutagenesis site" description="Impairs the binding of MTREX." evidence="12">
    <original>D</original>
    <variation>A</variation>
    <location>
        <position position="176"/>
    </location>
</feature>
<feature type="mutagenesis site" description="Decreased nuclear localization; when associated with 230-A--A-232. Complete loss of nuclear localization; when associated with 85-A-A-86 and 230-A--A-232." evidence="4">
    <original>KRK</original>
    <variation>AAA</variation>
    <location>
        <begin position="218"/>
        <end position="220"/>
    </location>
</feature>
<feature type="mutagenesis site" description="Decreased nuclear localization when associated with 218-A--A-220. Complete loss of nuclear localization; when associated with 85-A-A-86 and 218-A--A-220." evidence="4">
    <original>RKK</original>
    <variation>AAA</variation>
    <location>
        <begin position="230"/>
        <end position="232"/>
    </location>
</feature>
<feature type="mutagenesis site" description="Loss of ATP-binding. Significant reduction in interaction with TERT and in telomerase activity. Loss of interaction with MTREX." evidence="5 7 19">
    <original>K</original>
    <variation>M</variation>
    <location>
        <position position="311"/>
    </location>
</feature>
<feature type="mutagenesis site" description="Decreases 60S ribosomes synthesis. Strongly decreases 60S ribosomal subunit synthesis, enhances interaction with WDR74 and increases association of WDR74 and MTREX as well as induces partial migration of WDR74 to the nucleoplasm; when associated with Q-682." evidence="8 9">
    <original>E</original>
    <variation>Q</variation>
    <location>
        <position position="365"/>
    </location>
</feature>
<feature type="mutagenesis site" description="Loss of ATP-binding. No effect on interaction with TERT, MTREX and RPL5 and on telomerase activity. Significant reduction in the level of the 60S ribosomal subunit." evidence="4 5 7 8 19">
    <original>K</original>
    <variation>M</variation>
    <location>
        <position position="628"/>
    </location>
</feature>
<feature type="mutagenesis site" description="Decreases 60S ribosomes synthesis. Strongly decreases 60S ribosomal subunit synthesis, enhances interaction with WDR74 and increases association of WDR74 and MTREX as well as induces partial migration of WDR74 to the nucleoplasm; when associated with Q-365." evidence="8 9">
    <original>E</original>
    <variation>Q</variation>
    <location>
        <position position="682"/>
    </location>
</feature>
<feature type="strand" evidence="28">
    <location>
        <begin position="173"/>
        <end position="175"/>
    </location>
</feature>
<feature type="helix" evidence="27">
    <location>
        <begin position="585"/>
        <end position="597"/>
    </location>
</feature>
<feature type="helix" evidence="27">
    <location>
        <begin position="599"/>
        <end position="602"/>
    </location>
</feature>
<feature type="helix" evidence="27">
    <location>
        <begin position="604"/>
        <end position="609"/>
    </location>
</feature>
<feature type="strand" evidence="27">
    <location>
        <begin position="616"/>
        <end position="623"/>
    </location>
</feature>
<feature type="helix" evidence="27">
    <location>
        <begin position="628"/>
        <end position="638"/>
    </location>
</feature>
<feature type="strand" evidence="27">
    <location>
        <begin position="642"/>
        <end position="647"/>
    </location>
</feature>
<feature type="turn" evidence="27">
    <location>
        <begin position="648"/>
        <end position="651"/>
    </location>
</feature>
<feature type="helix" evidence="27">
    <location>
        <begin position="657"/>
        <end position="672"/>
    </location>
</feature>
<feature type="strand" evidence="27">
    <location>
        <begin position="675"/>
        <end position="681"/>
    </location>
</feature>
<feature type="turn" evidence="27">
    <location>
        <begin position="684"/>
        <end position="686"/>
    </location>
</feature>
<feature type="helix" evidence="27">
    <location>
        <begin position="701"/>
        <end position="710"/>
    </location>
</feature>
<feature type="strand" evidence="27">
    <location>
        <begin position="718"/>
        <end position="725"/>
    </location>
</feature>
<feature type="helix" evidence="27">
    <location>
        <begin position="727"/>
        <end position="729"/>
    </location>
</feature>
<feature type="helix" evidence="27">
    <location>
        <begin position="732"/>
        <end position="735"/>
    </location>
</feature>
<feature type="strand" evidence="27">
    <location>
        <begin position="742"/>
        <end position="745"/>
    </location>
</feature>
<feature type="helix" evidence="27">
    <location>
        <begin position="751"/>
        <end position="761"/>
    </location>
</feature>
<feature type="turn" evidence="27">
    <location>
        <begin position="762"/>
        <end position="769"/>
    </location>
</feature>
<feature type="helix" evidence="27">
    <location>
        <begin position="776"/>
        <end position="780"/>
    </location>
</feature>
<feature type="helix" evidence="27">
    <location>
        <begin position="784"/>
        <end position="786"/>
    </location>
</feature>
<feature type="helix" evidence="27">
    <location>
        <begin position="790"/>
        <end position="808"/>
    </location>
</feature>
<feature type="helix" evidence="27">
    <location>
        <begin position="825"/>
        <end position="832"/>
    </location>
</feature>
<gene>
    <name evidence="20" type="primary">NVL</name>
    <name evidence="16" type="synonym">NVL2</name>
</gene>
<sequence>MKPRPAGFVDNKLKQRVIQYLTSNKCGKYVDIGVLASDLQRVYSIDYGRRKRNAFRIQVEKVFSIISSEKELKNLTELEDEHLAKRARQGEEDNEYTESYSDDDSSMEDYPDPQSANHMNSSLLSLYRKGNPDSVSNTPEMEQRETTSSTPRISSKTGSIPLKTPAKDSEGGWFIDKTPSVKKDSFFLDLSCEKSNPKKPITEIQDSKDSSLLESDMKRKGKLKNKGSKRKKEDLQEVDGEIEAVLQKKAKARGLEFQISNVKFEDVGGNDMTLKEVCKMLIHMRHPEVYHHLGVVPPRGVLLHGPPGCGKTLLAHAIAGELDLPILKVAAPEIVSGVSGESEQKLRELFEQAVSNAPCIIFIDEIDAITPKREVASKDMERRIVAQLLTCMDDLNNVAATARVLVIGATNRPDSLDPALRRAGRFDREICLGIPDEASRERILQTLCRKLRLPQAFDFCHLAHLTPGFVGADLMALCREAAMCAVNRVLMKLQEQQKKNPEMEDLPSKGVQEERLGTEPTSETQDELQRLLGLLRDQDPLSEEQMQGLCIELNDFIVALSSVQPSAKREGFVTVPNVTWADIGALEDIREELTMAILAPVRNPDQFKALGLVTPAGVLLAGPPGCGKTLLAKAVANESGLNFISVKGPELLNMYVGESERAVRQVFQRAKNSAPCVIFFDEVDALCPRRSDRETGASVRVVNQLLTEMDGLEARQQVFIMAATNRPDIIDPAILRPGRLDKTLFVGLPPPADRLAILKTITKNGTKPPLDADVNLEAIAGDLRCDCYTGADLSALVREASICALRQEMARQKSGNEKGELKVSHKHFEEAFKKVRSSISKKDQIMYERLQESLSR</sequence>
<dbReference type="EMBL" id="U68140">
    <property type="protein sequence ID" value="AAB70457.1"/>
    <property type="molecule type" value="mRNA"/>
</dbReference>
<dbReference type="EMBL" id="U78772">
    <property type="protein sequence ID" value="AAB70460.1"/>
    <property type="molecule type" value="mRNA"/>
</dbReference>
<dbReference type="EMBL" id="AK297396">
    <property type="protein sequence ID" value="BAG59836.1"/>
    <property type="molecule type" value="mRNA"/>
</dbReference>
<dbReference type="EMBL" id="AK298244">
    <property type="protein sequence ID" value="BAG60510.1"/>
    <property type="molecule type" value="mRNA"/>
</dbReference>
<dbReference type="EMBL" id="AC092809">
    <property type="status" value="NOT_ANNOTATED_CDS"/>
    <property type="molecule type" value="Genomic_DNA"/>
</dbReference>
<dbReference type="EMBL" id="BC012105">
    <property type="protein sequence ID" value="AAH12105.1"/>
    <property type="molecule type" value="mRNA"/>
</dbReference>
<dbReference type="CCDS" id="CCDS1541.1">
    <molecule id="O15381-1"/>
</dbReference>
<dbReference type="CCDS" id="CCDS1542.1">
    <molecule id="O15381-2"/>
</dbReference>
<dbReference type="CCDS" id="CCDS58062.1">
    <molecule id="O15381-4"/>
</dbReference>
<dbReference type="CCDS" id="CCDS58063.1">
    <molecule id="O15381-5"/>
</dbReference>
<dbReference type="RefSeq" id="NP_001230075.1">
    <molecule id="O15381-4"/>
    <property type="nucleotide sequence ID" value="NM_001243146.2"/>
</dbReference>
<dbReference type="RefSeq" id="NP_001230076.1">
    <molecule id="O15381-5"/>
    <property type="nucleotide sequence ID" value="NM_001243147.2"/>
</dbReference>
<dbReference type="RefSeq" id="NP_002524.2">
    <molecule id="O15381-1"/>
    <property type="nucleotide sequence ID" value="NM_002533.3"/>
</dbReference>
<dbReference type="RefSeq" id="NP_996671.1">
    <molecule id="O15381-2"/>
    <property type="nucleotide sequence ID" value="NM_206840.3"/>
</dbReference>
<dbReference type="PDB" id="2X8A">
    <property type="method" value="X-ray"/>
    <property type="resolution" value="2.60 A"/>
    <property type="chains" value="A=574-845"/>
</dbReference>
<dbReference type="PDB" id="6RO1">
    <property type="method" value="X-ray"/>
    <property type="resolution" value="3.07 A"/>
    <property type="chains" value="B=167-216"/>
</dbReference>
<dbReference type="PDBsum" id="2X8A"/>
<dbReference type="PDBsum" id="6RO1"/>
<dbReference type="SMR" id="O15381"/>
<dbReference type="BioGRID" id="110985">
    <property type="interactions" value="165"/>
</dbReference>
<dbReference type="FunCoup" id="O15381">
    <property type="interactions" value="4326"/>
</dbReference>
<dbReference type="IntAct" id="O15381">
    <property type="interactions" value="123"/>
</dbReference>
<dbReference type="MINT" id="O15381"/>
<dbReference type="STRING" id="9606.ENSP00000281701"/>
<dbReference type="GlyGen" id="O15381">
    <property type="glycosylation" value="2 sites, 1 N-linked glycan (1 site), 1 O-linked glycan (1 site)"/>
</dbReference>
<dbReference type="iPTMnet" id="O15381"/>
<dbReference type="MetOSite" id="O15381"/>
<dbReference type="PhosphoSitePlus" id="O15381"/>
<dbReference type="SwissPalm" id="O15381"/>
<dbReference type="BioMuta" id="NVL"/>
<dbReference type="jPOST" id="O15381"/>
<dbReference type="MassIVE" id="O15381"/>
<dbReference type="PaxDb" id="9606-ENSP00000281701"/>
<dbReference type="PeptideAtlas" id="O15381"/>
<dbReference type="ProteomicsDB" id="4595"/>
<dbReference type="ProteomicsDB" id="4771"/>
<dbReference type="ProteomicsDB" id="48620">
    <molecule id="O15381-1"/>
</dbReference>
<dbReference type="ProteomicsDB" id="48621">
    <molecule id="O15381-2"/>
</dbReference>
<dbReference type="ProteomicsDB" id="48622">
    <molecule id="O15381-3"/>
</dbReference>
<dbReference type="Pumba" id="O15381"/>
<dbReference type="Antibodypedia" id="34637">
    <property type="antibodies" value="219 antibodies from 28 providers"/>
</dbReference>
<dbReference type="DNASU" id="4931"/>
<dbReference type="Ensembl" id="ENST00000281701.11">
    <molecule id="O15381-1"/>
    <property type="protein sequence ID" value="ENSP00000281701.6"/>
    <property type="gene ID" value="ENSG00000143748.18"/>
</dbReference>
<dbReference type="Ensembl" id="ENST00000340871.8">
    <molecule id="O15381-4"/>
    <property type="protein sequence ID" value="ENSP00000341362.4"/>
    <property type="gene ID" value="ENSG00000143748.18"/>
</dbReference>
<dbReference type="Ensembl" id="ENST00000391875.6">
    <molecule id="O15381-2"/>
    <property type="protein sequence ID" value="ENSP00000375747.2"/>
    <property type="gene ID" value="ENSG00000143748.18"/>
</dbReference>
<dbReference type="Ensembl" id="ENST00000469075.5">
    <molecule id="O15381-5"/>
    <property type="protein sequence ID" value="ENSP00000417826.1"/>
    <property type="gene ID" value="ENSG00000143748.18"/>
</dbReference>
<dbReference type="Ensembl" id="ENST00000469968.5">
    <molecule id="O15381-3"/>
    <property type="protein sequence ID" value="ENSP00000419420.2"/>
    <property type="gene ID" value="ENSG00000143748.18"/>
</dbReference>
<dbReference type="Ensembl" id="ENST00000482491.5">
    <molecule id="O15381-4"/>
    <property type="protein sequence ID" value="ENSP00000417213.2"/>
    <property type="gene ID" value="ENSG00000143748.18"/>
</dbReference>
<dbReference type="GeneID" id="4931"/>
<dbReference type="KEGG" id="hsa:4931"/>
<dbReference type="MANE-Select" id="ENST00000281701.11">
    <property type="protein sequence ID" value="ENSP00000281701.6"/>
    <property type="RefSeq nucleotide sequence ID" value="NM_002533.4"/>
    <property type="RefSeq protein sequence ID" value="NP_002524.2"/>
</dbReference>
<dbReference type="UCSC" id="uc001hok.4">
    <molecule id="O15381-1"/>
    <property type="organism name" value="human"/>
</dbReference>
<dbReference type="AGR" id="HGNC:8070"/>
<dbReference type="CTD" id="4931"/>
<dbReference type="DisGeNET" id="4931"/>
<dbReference type="GeneCards" id="NVL"/>
<dbReference type="HGNC" id="HGNC:8070">
    <property type="gene designation" value="NVL"/>
</dbReference>
<dbReference type="HPA" id="ENSG00000143748">
    <property type="expression patterns" value="Low tissue specificity"/>
</dbReference>
<dbReference type="MIM" id="602426">
    <property type="type" value="gene"/>
</dbReference>
<dbReference type="neXtProt" id="NX_O15381"/>
<dbReference type="OpenTargets" id="ENSG00000143748"/>
<dbReference type="PharmGKB" id="PA31857"/>
<dbReference type="VEuPathDB" id="HostDB:ENSG00000143748"/>
<dbReference type="eggNOG" id="KOG0733">
    <property type="taxonomic scope" value="Eukaryota"/>
</dbReference>
<dbReference type="GeneTree" id="ENSGT00570000079239"/>
<dbReference type="HOGENOM" id="CLU_000688_12_3_1"/>
<dbReference type="InParanoid" id="O15381"/>
<dbReference type="OMA" id="GLWSTHR"/>
<dbReference type="OrthoDB" id="2187at2759"/>
<dbReference type="PAN-GO" id="O15381">
    <property type="GO annotations" value="5 GO annotations based on evolutionary models"/>
</dbReference>
<dbReference type="PhylomeDB" id="O15381"/>
<dbReference type="TreeFam" id="TF314681"/>
<dbReference type="PathwayCommons" id="O15381"/>
<dbReference type="SignaLink" id="O15381"/>
<dbReference type="BioGRID-ORCS" id="4931">
    <property type="hits" value="798 hits in 1162 CRISPR screens"/>
</dbReference>
<dbReference type="CD-CODE" id="91857CE7">
    <property type="entry name" value="Nucleolus"/>
</dbReference>
<dbReference type="ChiTaRS" id="NVL">
    <property type="organism name" value="human"/>
</dbReference>
<dbReference type="EvolutionaryTrace" id="O15381"/>
<dbReference type="GeneWiki" id="NVL_(gene)"/>
<dbReference type="GenomeRNAi" id="4931"/>
<dbReference type="Pharos" id="O15381">
    <property type="development level" value="Tbio"/>
</dbReference>
<dbReference type="PRO" id="PR:O15381"/>
<dbReference type="Proteomes" id="UP000005640">
    <property type="component" value="Chromosome 1"/>
</dbReference>
<dbReference type="RNAct" id="O15381">
    <property type="molecule type" value="protein"/>
</dbReference>
<dbReference type="Bgee" id="ENSG00000143748">
    <property type="expression patterns" value="Expressed in sural nerve and 120 other cell types or tissues"/>
</dbReference>
<dbReference type="ExpressionAtlas" id="O15381">
    <property type="expression patterns" value="baseline and differential"/>
</dbReference>
<dbReference type="GO" id="GO:0016020">
    <property type="term" value="C:membrane"/>
    <property type="evidence" value="ECO:0007005"/>
    <property type="project" value="UniProtKB"/>
</dbReference>
<dbReference type="GO" id="GO:0005730">
    <property type="term" value="C:nucleolus"/>
    <property type="evidence" value="ECO:0000314"/>
    <property type="project" value="HPA"/>
</dbReference>
<dbReference type="GO" id="GO:0005654">
    <property type="term" value="C:nucleoplasm"/>
    <property type="evidence" value="ECO:0000314"/>
    <property type="project" value="HPA"/>
</dbReference>
<dbReference type="GO" id="GO:0005634">
    <property type="term" value="C:nucleus"/>
    <property type="evidence" value="ECO:0000314"/>
    <property type="project" value="UniProtKB"/>
</dbReference>
<dbReference type="GO" id="GO:0005697">
    <property type="term" value="C:telomerase holoenzyme complex"/>
    <property type="evidence" value="ECO:0000314"/>
    <property type="project" value="UniProtKB"/>
</dbReference>
<dbReference type="GO" id="GO:0005524">
    <property type="term" value="F:ATP binding"/>
    <property type="evidence" value="ECO:0000315"/>
    <property type="project" value="UniProtKB"/>
</dbReference>
<dbReference type="GO" id="GO:0016887">
    <property type="term" value="F:ATP hydrolysis activity"/>
    <property type="evidence" value="ECO:0000318"/>
    <property type="project" value="GO_Central"/>
</dbReference>
<dbReference type="GO" id="GO:1990275">
    <property type="term" value="F:preribosome binding"/>
    <property type="evidence" value="ECO:0000314"/>
    <property type="project" value="UniProtKB"/>
</dbReference>
<dbReference type="GO" id="GO:0003723">
    <property type="term" value="F:RNA binding"/>
    <property type="evidence" value="ECO:0007005"/>
    <property type="project" value="UniProtKB"/>
</dbReference>
<dbReference type="GO" id="GO:0032092">
    <property type="term" value="P:positive regulation of protein binding"/>
    <property type="evidence" value="ECO:0000314"/>
    <property type="project" value="UniProtKB"/>
</dbReference>
<dbReference type="GO" id="GO:0032206">
    <property type="term" value="P:positive regulation of telomere maintenance"/>
    <property type="evidence" value="ECO:0000315"/>
    <property type="project" value="ARUK-UCL"/>
</dbReference>
<dbReference type="GO" id="GO:1904749">
    <property type="term" value="P:regulation of protein localization to nucleolus"/>
    <property type="evidence" value="ECO:0000314"/>
    <property type="project" value="UniProtKB"/>
</dbReference>
<dbReference type="GO" id="GO:0042273">
    <property type="term" value="P:ribosomal large subunit biogenesis"/>
    <property type="evidence" value="ECO:0000314"/>
    <property type="project" value="UniProtKB"/>
</dbReference>
<dbReference type="GO" id="GO:0042254">
    <property type="term" value="P:ribosome biogenesis"/>
    <property type="evidence" value="ECO:0000315"/>
    <property type="project" value="UniProtKB"/>
</dbReference>
<dbReference type="GO" id="GO:0006364">
    <property type="term" value="P:rRNA processing"/>
    <property type="evidence" value="ECO:0000314"/>
    <property type="project" value="UniProtKB"/>
</dbReference>
<dbReference type="GO" id="GO:1905323">
    <property type="term" value="P:telomerase holoenzyme complex assembly"/>
    <property type="evidence" value="ECO:0000315"/>
    <property type="project" value="ARUK-UCL"/>
</dbReference>
<dbReference type="CDD" id="cd19518">
    <property type="entry name" value="RecA-like_NVL_r1-like"/>
    <property type="match status" value="1"/>
</dbReference>
<dbReference type="CDD" id="cd19530">
    <property type="entry name" value="RecA-like_NVL_r2-like"/>
    <property type="match status" value="1"/>
</dbReference>
<dbReference type="FunFam" id="1.10.10.2010:FF:000001">
    <property type="entry name" value="Nuclear valosin-containing protein-like"/>
    <property type="match status" value="1"/>
</dbReference>
<dbReference type="FunFam" id="1.10.8.60:FF:000063">
    <property type="entry name" value="Nuclear valosin-containing protein-like"/>
    <property type="match status" value="1"/>
</dbReference>
<dbReference type="FunFam" id="1.10.8.60:FF:000172">
    <property type="entry name" value="Nuclear valosin-containing protein-like"/>
    <property type="match status" value="1"/>
</dbReference>
<dbReference type="FunFam" id="3.40.50.300:FF:000149">
    <property type="entry name" value="Nuclear valosin-containing protein-like"/>
    <property type="match status" value="1"/>
</dbReference>
<dbReference type="FunFam" id="3.40.50.300:FF:000600">
    <property type="entry name" value="Nuclear valosin-containing protein-like"/>
    <property type="match status" value="1"/>
</dbReference>
<dbReference type="Gene3D" id="1.10.10.2010">
    <property type="match status" value="1"/>
</dbReference>
<dbReference type="Gene3D" id="1.10.8.60">
    <property type="match status" value="2"/>
</dbReference>
<dbReference type="Gene3D" id="3.40.50.300">
    <property type="entry name" value="P-loop containing nucleotide triphosphate hydrolases"/>
    <property type="match status" value="2"/>
</dbReference>
<dbReference type="InterPro" id="IPR003593">
    <property type="entry name" value="AAA+_ATPase"/>
</dbReference>
<dbReference type="InterPro" id="IPR050168">
    <property type="entry name" value="AAA_ATPase_domain"/>
</dbReference>
<dbReference type="InterPro" id="IPR041569">
    <property type="entry name" value="AAA_lid_3"/>
</dbReference>
<dbReference type="InterPro" id="IPR003959">
    <property type="entry name" value="ATPase_AAA_core"/>
</dbReference>
<dbReference type="InterPro" id="IPR003960">
    <property type="entry name" value="ATPase_AAA_CS"/>
</dbReference>
<dbReference type="InterPro" id="IPR038100">
    <property type="entry name" value="NLV2_N_sf"/>
</dbReference>
<dbReference type="InterPro" id="IPR031996">
    <property type="entry name" value="NVL2_nucleolin-bd"/>
</dbReference>
<dbReference type="InterPro" id="IPR027417">
    <property type="entry name" value="P-loop_NTPase"/>
</dbReference>
<dbReference type="PANTHER" id="PTHR23077">
    <property type="entry name" value="AAA-FAMILY ATPASE"/>
    <property type="match status" value="1"/>
</dbReference>
<dbReference type="PANTHER" id="PTHR23077:SF171">
    <property type="entry name" value="NUCLEAR VALOSIN-CONTAINING PROTEIN-LIKE"/>
    <property type="match status" value="1"/>
</dbReference>
<dbReference type="Pfam" id="PF00004">
    <property type="entry name" value="AAA"/>
    <property type="match status" value="2"/>
</dbReference>
<dbReference type="Pfam" id="PF17862">
    <property type="entry name" value="AAA_lid_3"/>
    <property type="match status" value="2"/>
</dbReference>
<dbReference type="Pfam" id="PF16725">
    <property type="entry name" value="Nucleolin_bd"/>
    <property type="match status" value="1"/>
</dbReference>
<dbReference type="SMART" id="SM00382">
    <property type="entry name" value="AAA"/>
    <property type="match status" value="2"/>
</dbReference>
<dbReference type="SUPFAM" id="SSF52540">
    <property type="entry name" value="P-loop containing nucleoside triphosphate hydrolases"/>
    <property type="match status" value="2"/>
</dbReference>
<dbReference type="PROSITE" id="PS00674">
    <property type="entry name" value="AAA"/>
    <property type="match status" value="2"/>
</dbReference>
<reference key="1">
    <citation type="journal article" date="1997" name="Genomics">
        <title>NVL: a new member of the AAA family of ATPases localized to the nucleus.</title>
        <authorList>
            <person name="Germain-Lee E.L."/>
            <person name="Obie C."/>
            <person name="Valle D."/>
        </authorList>
    </citation>
    <scope>NUCLEOTIDE SEQUENCE [MRNA] (ISOFORMS 1 AND 2)</scope>
    <scope>VARIANT GLY-359</scope>
    <scope>PHOSPHORYLATION</scope>
    <scope>SUBCELLULAR LOCATION</scope>
    <scope>TISSUE SPECIFICITY</scope>
    <source>
        <tissue>Kidney</tissue>
    </source>
</reference>
<reference key="2">
    <citation type="journal article" date="2004" name="Nat. Genet.">
        <title>Complete sequencing and characterization of 21,243 full-length human cDNAs.</title>
        <authorList>
            <person name="Ota T."/>
            <person name="Suzuki Y."/>
            <person name="Nishikawa T."/>
            <person name="Otsuki T."/>
            <person name="Sugiyama T."/>
            <person name="Irie R."/>
            <person name="Wakamatsu A."/>
            <person name="Hayashi K."/>
            <person name="Sato H."/>
            <person name="Nagai K."/>
            <person name="Kimura K."/>
            <person name="Makita H."/>
            <person name="Sekine M."/>
            <person name="Obayashi M."/>
            <person name="Nishi T."/>
            <person name="Shibahara T."/>
            <person name="Tanaka T."/>
            <person name="Ishii S."/>
            <person name="Yamamoto J."/>
            <person name="Saito K."/>
            <person name="Kawai Y."/>
            <person name="Isono Y."/>
            <person name="Nakamura Y."/>
            <person name="Nagahari K."/>
            <person name="Murakami K."/>
            <person name="Yasuda T."/>
            <person name="Iwayanagi T."/>
            <person name="Wagatsuma M."/>
            <person name="Shiratori A."/>
            <person name="Sudo H."/>
            <person name="Hosoiri T."/>
            <person name="Kaku Y."/>
            <person name="Kodaira H."/>
            <person name="Kondo H."/>
            <person name="Sugawara M."/>
            <person name="Takahashi M."/>
            <person name="Kanda K."/>
            <person name="Yokoi T."/>
            <person name="Furuya T."/>
            <person name="Kikkawa E."/>
            <person name="Omura Y."/>
            <person name="Abe K."/>
            <person name="Kamihara K."/>
            <person name="Katsuta N."/>
            <person name="Sato K."/>
            <person name="Tanikawa M."/>
            <person name="Yamazaki M."/>
            <person name="Ninomiya K."/>
            <person name="Ishibashi T."/>
            <person name="Yamashita H."/>
            <person name="Murakawa K."/>
            <person name="Fujimori K."/>
            <person name="Tanai H."/>
            <person name="Kimata M."/>
            <person name="Watanabe M."/>
            <person name="Hiraoka S."/>
            <person name="Chiba Y."/>
            <person name="Ishida S."/>
            <person name="Ono Y."/>
            <person name="Takiguchi S."/>
            <person name="Watanabe S."/>
            <person name="Yosida M."/>
            <person name="Hotuta T."/>
            <person name="Kusano J."/>
            <person name="Kanehori K."/>
            <person name="Takahashi-Fujii A."/>
            <person name="Hara H."/>
            <person name="Tanase T.-O."/>
            <person name="Nomura Y."/>
            <person name="Togiya S."/>
            <person name="Komai F."/>
            <person name="Hara R."/>
            <person name="Takeuchi K."/>
            <person name="Arita M."/>
            <person name="Imose N."/>
            <person name="Musashino K."/>
            <person name="Yuuki H."/>
            <person name="Oshima A."/>
            <person name="Sasaki N."/>
            <person name="Aotsuka S."/>
            <person name="Yoshikawa Y."/>
            <person name="Matsunawa H."/>
            <person name="Ichihara T."/>
            <person name="Shiohata N."/>
            <person name="Sano S."/>
            <person name="Moriya S."/>
            <person name="Momiyama H."/>
            <person name="Satoh N."/>
            <person name="Takami S."/>
            <person name="Terashima Y."/>
            <person name="Suzuki O."/>
            <person name="Nakagawa S."/>
            <person name="Senoh A."/>
            <person name="Mizoguchi H."/>
            <person name="Goto Y."/>
            <person name="Shimizu F."/>
            <person name="Wakebe H."/>
            <person name="Hishigaki H."/>
            <person name="Watanabe T."/>
            <person name="Sugiyama A."/>
            <person name="Takemoto M."/>
            <person name="Kawakami B."/>
            <person name="Yamazaki M."/>
            <person name="Watanabe K."/>
            <person name="Kumagai A."/>
            <person name="Itakura S."/>
            <person name="Fukuzumi Y."/>
            <person name="Fujimori Y."/>
            <person name="Komiyama M."/>
            <person name="Tashiro H."/>
            <person name="Tanigami A."/>
            <person name="Fujiwara T."/>
            <person name="Ono T."/>
            <person name="Yamada K."/>
            <person name="Fujii Y."/>
            <person name="Ozaki K."/>
            <person name="Hirao M."/>
            <person name="Ohmori Y."/>
            <person name="Kawabata A."/>
            <person name="Hikiji T."/>
            <person name="Kobatake N."/>
            <person name="Inagaki H."/>
            <person name="Ikema Y."/>
            <person name="Okamoto S."/>
            <person name="Okitani R."/>
            <person name="Kawakami T."/>
            <person name="Noguchi S."/>
            <person name="Itoh T."/>
            <person name="Shigeta K."/>
            <person name="Senba T."/>
            <person name="Matsumura K."/>
            <person name="Nakajima Y."/>
            <person name="Mizuno T."/>
            <person name="Morinaga M."/>
            <person name="Sasaki M."/>
            <person name="Togashi T."/>
            <person name="Oyama M."/>
            <person name="Hata H."/>
            <person name="Watanabe M."/>
            <person name="Komatsu T."/>
            <person name="Mizushima-Sugano J."/>
            <person name="Satoh T."/>
            <person name="Shirai Y."/>
            <person name="Takahashi Y."/>
            <person name="Nakagawa K."/>
            <person name="Okumura K."/>
            <person name="Nagase T."/>
            <person name="Nomura N."/>
            <person name="Kikuchi H."/>
            <person name="Masuho Y."/>
            <person name="Yamashita R."/>
            <person name="Nakai K."/>
            <person name="Yada T."/>
            <person name="Nakamura Y."/>
            <person name="Ohara O."/>
            <person name="Isogai T."/>
            <person name="Sugano S."/>
        </authorList>
    </citation>
    <scope>NUCLEOTIDE SEQUENCE [LARGE SCALE MRNA] (ISOFORMS 4 AND 5)</scope>
    <source>
        <tissue>Brain</tissue>
    </source>
</reference>
<reference key="3">
    <citation type="journal article" date="2006" name="Nature">
        <title>The DNA sequence and biological annotation of human chromosome 1.</title>
        <authorList>
            <person name="Gregory S.G."/>
            <person name="Barlow K.F."/>
            <person name="McLay K.E."/>
            <person name="Kaul R."/>
            <person name="Swarbreck D."/>
            <person name="Dunham A."/>
            <person name="Scott C.E."/>
            <person name="Howe K.L."/>
            <person name="Woodfine K."/>
            <person name="Spencer C.C.A."/>
            <person name="Jones M.C."/>
            <person name="Gillson C."/>
            <person name="Searle S."/>
            <person name="Zhou Y."/>
            <person name="Kokocinski F."/>
            <person name="McDonald L."/>
            <person name="Evans R."/>
            <person name="Phillips K."/>
            <person name="Atkinson A."/>
            <person name="Cooper R."/>
            <person name="Jones C."/>
            <person name="Hall R.E."/>
            <person name="Andrews T.D."/>
            <person name="Lloyd C."/>
            <person name="Ainscough R."/>
            <person name="Almeida J.P."/>
            <person name="Ambrose K.D."/>
            <person name="Anderson F."/>
            <person name="Andrew R.W."/>
            <person name="Ashwell R.I.S."/>
            <person name="Aubin K."/>
            <person name="Babbage A.K."/>
            <person name="Bagguley C.L."/>
            <person name="Bailey J."/>
            <person name="Beasley H."/>
            <person name="Bethel G."/>
            <person name="Bird C.P."/>
            <person name="Bray-Allen S."/>
            <person name="Brown J.Y."/>
            <person name="Brown A.J."/>
            <person name="Buckley D."/>
            <person name="Burton J."/>
            <person name="Bye J."/>
            <person name="Carder C."/>
            <person name="Chapman J.C."/>
            <person name="Clark S.Y."/>
            <person name="Clarke G."/>
            <person name="Clee C."/>
            <person name="Cobley V."/>
            <person name="Collier R.E."/>
            <person name="Corby N."/>
            <person name="Coville G.J."/>
            <person name="Davies J."/>
            <person name="Deadman R."/>
            <person name="Dunn M."/>
            <person name="Earthrowl M."/>
            <person name="Ellington A.G."/>
            <person name="Errington H."/>
            <person name="Frankish A."/>
            <person name="Frankland J."/>
            <person name="French L."/>
            <person name="Garner P."/>
            <person name="Garnett J."/>
            <person name="Gay L."/>
            <person name="Ghori M.R.J."/>
            <person name="Gibson R."/>
            <person name="Gilby L.M."/>
            <person name="Gillett W."/>
            <person name="Glithero R.J."/>
            <person name="Grafham D.V."/>
            <person name="Griffiths C."/>
            <person name="Griffiths-Jones S."/>
            <person name="Grocock R."/>
            <person name="Hammond S."/>
            <person name="Harrison E.S.I."/>
            <person name="Hart E."/>
            <person name="Haugen E."/>
            <person name="Heath P.D."/>
            <person name="Holmes S."/>
            <person name="Holt K."/>
            <person name="Howden P.J."/>
            <person name="Hunt A.R."/>
            <person name="Hunt S.E."/>
            <person name="Hunter G."/>
            <person name="Isherwood J."/>
            <person name="James R."/>
            <person name="Johnson C."/>
            <person name="Johnson D."/>
            <person name="Joy A."/>
            <person name="Kay M."/>
            <person name="Kershaw J.K."/>
            <person name="Kibukawa M."/>
            <person name="Kimberley A.M."/>
            <person name="King A."/>
            <person name="Knights A.J."/>
            <person name="Lad H."/>
            <person name="Laird G."/>
            <person name="Lawlor S."/>
            <person name="Leongamornlert D.A."/>
            <person name="Lloyd D.M."/>
            <person name="Loveland J."/>
            <person name="Lovell J."/>
            <person name="Lush M.J."/>
            <person name="Lyne R."/>
            <person name="Martin S."/>
            <person name="Mashreghi-Mohammadi M."/>
            <person name="Matthews L."/>
            <person name="Matthews N.S.W."/>
            <person name="McLaren S."/>
            <person name="Milne S."/>
            <person name="Mistry S."/>
            <person name="Moore M.J.F."/>
            <person name="Nickerson T."/>
            <person name="O'Dell C.N."/>
            <person name="Oliver K."/>
            <person name="Palmeiri A."/>
            <person name="Palmer S.A."/>
            <person name="Parker A."/>
            <person name="Patel D."/>
            <person name="Pearce A.V."/>
            <person name="Peck A.I."/>
            <person name="Pelan S."/>
            <person name="Phelps K."/>
            <person name="Phillimore B.J."/>
            <person name="Plumb R."/>
            <person name="Rajan J."/>
            <person name="Raymond C."/>
            <person name="Rouse G."/>
            <person name="Saenphimmachak C."/>
            <person name="Sehra H.K."/>
            <person name="Sheridan E."/>
            <person name="Shownkeen R."/>
            <person name="Sims S."/>
            <person name="Skuce C.D."/>
            <person name="Smith M."/>
            <person name="Steward C."/>
            <person name="Subramanian S."/>
            <person name="Sycamore N."/>
            <person name="Tracey A."/>
            <person name="Tromans A."/>
            <person name="Van Helmond Z."/>
            <person name="Wall M."/>
            <person name="Wallis J.M."/>
            <person name="White S."/>
            <person name="Whitehead S.L."/>
            <person name="Wilkinson J.E."/>
            <person name="Willey D.L."/>
            <person name="Williams H."/>
            <person name="Wilming L."/>
            <person name="Wray P.W."/>
            <person name="Wu Z."/>
            <person name="Coulson A."/>
            <person name="Vaudin M."/>
            <person name="Sulston J.E."/>
            <person name="Durbin R.M."/>
            <person name="Hubbard T."/>
            <person name="Wooster R."/>
            <person name="Dunham I."/>
            <person name="Carter N.P."/>
            <person name="McVean G."/>
            <person name="Ross M.T."/>
            <person name="Harrow J."/>
            <person name="Olson M.V."/>
            <person name="Beck S."/>
            <person name="Rogers J."/>
            <person name="Bentley D.R."/>
        </authorList>
    </citation>
    <scope>NUCLEOTIDE SEQUENCE [LARGE SCALE GENOMIC DNA]</scope>
</reference>
<reference key="4">
    <citation type="journal article" date="2004" name="Genome Res.">
        <title>The status, quality, and expansion of the NIH full-length cDNA project: the Mammalian Gene Collection (MGC).</title>
        <authorList>
            <consortium name="The MGC Project Team"/>
        </authorList>
    </citation>
    <scope>NUCLEOTIDE SEQUENCE [LARGE SCALE MRNA] (ISOFORM 3)</scope>
    <source>
        <tissue>Eye</tissue>
    </source>
</reference>
<reference key="5">
    <citation type="journal article" date="2002" name="Mol. Biol. Cell">
        <title>Functional proteomic analysis of human nucleolus.</title>
        <authorList>
            <person name="Scherl A."/>
            <person name="Coute Y."/>
            <person name="Deon C."/>
            <person name="Calle A."/>
            <person name="Kindbeiter K."/>
            <person name="Sanchez J.-C."/>
            <person name="Greco A."/>
            <person name="Hochstrasser D.F."/>
            <person name="Diaz J.-J."/>
        </authorList>
    </citation>
    <scope>SUBCELLULAR LOCATION [LARGE SCALE ANALYSIS]</scope>
    <source>
        <tissue>Cervix carcinoma</tissue>
    </source>
</reference>
<reference key="6">
    <citation type="journal article" date="2004" name="Mol. Biol. Cell">
        <title>NVL2 is a nucleolar AAA-ATPase that interacts with ribosomal protein L5 through its nucleolar localization sequence.</title>
        <authorList>
            <person name="Nagahama M."/>
            <person name="Hara Y."/>
            <person name="Seki A."/>
            <person name="Yamazoe T."/>
            <person name="Kawate Y."/>
            <person name="Shinohara T."/>
            <person name="Hatsuzawa K."/>
            <person name="Tani K."/>
            <person name="Tagaya M."/>
        </authorList>
    </citation>
    <scope>FUNCTION</scope>
    <scope>SUBCELLULAR LOCATION (ISOFORMS 1 AND 2)</scope>
    <scope>INTERACTION WITH RPL5</scope>
    <scope>NUCLEOLAR LOCALIZATION SIGNAL</scope>
    <scope>NUCLEAR LOCALIZATION SIGNAL</scope>
    <scope>MUTAGENESIS OF 51-LYS-ARG-52; 85-LYS-LYS-86; 218-LYS--LYS-220; 230-ARG--LYS-232 AND LYS-628</scope>
</reference>
<reference key="7">
    <citation type="journal article" date="2006" name="Biochem. Biophys. Res. Commun.">
        <title>The AAA-ATPase NVL2 is a component of pre-ribosomal particles that interacts with the DExD/H-box RNA helicase DOB1.</title>
        <authorList>
            <person name="Nagahama M."/>
            <person name="Yamazoe T."/>
            <person name="Hara Y."/>
            <person name="Tani K."/>
            <person name="Tsuji A."/>
            <person name="Tagaya M."/>
        </authorList>
    </citation>
    <scope>FUNCTION</scope>
    <scope>SUBCELLULAR LOCATION</scope>
    <scope>INTERACTION WITH MTREX</scope>
    <scope>MUTAGENESIS OF LYS-311 AND LYS-628</scope>
</reference>
<reference key="8">
    <citation type="journal article" date="2008" name="Proc. Natl. Acad. Sci. U.S.A.">
        <title>A quantitative atlas of mitotic phosphorylation.</title>
        <authorList>
            <person name="Dephoure N."/>
            <person name="Zhou C."/>
            <person name="Villen J."/>
            <person name="Beausoleil S.A."/>
            <person name="Bakalarski C.E."/>
            <person name="Elledge S.J."/>
            <person name="Gygi S.P."/>
        </authorList>
    </citation>
    <scope>PHOSPHORYLATION [LARGE SCALE ANALYSIS] AT SER-134 AND THR-138</scope>
    <scope>IDENTIFICATION BY MASS SPECTROMETRY [LARGE SCALE ANALYSIS]</scope>
    <source>
        <tissue>Cervix carcinoma</tissue>
    </source>
</reference>
<reference key="9">
    <citation type="journal article" date="2010" name="Sci. Signal.">
        <title>Quantitative phosphoproteomics reveals widespread full phosphorylation site occupancy during mitosis.</title>
        <authorList>
            <person name="Olsen J.V."/>
            <person name="Vermeulen M."/>
            <person name="Santamaria A."/>
            <person name="Kumar C."/>
            <person name="Miller M.L."/>
            <person name="Jensen L.J."/>
            <person name="Gnad F."/>
            <person name="Cox J."/>
            <person name="Jensen T.S."/>
            <person name="Nigg E.A."/>
            <person name="Brunak S."/>
            <person name="Mann M."/>
        </authorList>
    </citation>
    <scope>PHOSPHORYLATION [LARGE SCALE ANALYSIS] AT SER-134; THR-138; SER-211 AND SER-215</scope>
    <scope>IDENTIFICATION BY MASS SPECTROMETRY [LARGE SCALE ANALYSIS]</scope>
    <source>
        <tissue>Cervix carcinoma</tissue>
    </source>
</reference>
<reference key="10">
    <citation type="journal article" date="2011" name="BMC Syst. Biol.">
        <title>Initial characterization of the human central proteome.</title>
        <authorList>
            <person name="Burkard T.R."/>
            <person name="Planyavsky M."/>
            <person name="Kaupe I."/>
            <person name="Breitwieser F.P."/>
            <person name="Buerckstuemmer T."/>
            <person name="Bennett K.L."/>
            <person name="Superti-Furga G."/>
            <person name="Colinge J."/>
        </authorList>
    </citation>
    <scope>IDENTIFICATION BY MASS SPECTROMETRY [LARGE SCALE ANALYSIS]</scope>
</reference>
<reference key="11">
    <citation type="journal article" date="2011" name="J. Biol. Chem.">
        <title>Structure and function of the N-terminal nucleolin binding domain of nuclear valosin-containing protein-like 2 (NVL2) harboring a nucleolar localization signal.</title>
        <authorList>
            <person name="Fujiwara Y."/>
            <person name="Fujiwara K."/>
            <person name="Goda N."/>
            <person name="Iwaya N."/>
            <person name="Tenno T."/>
            <person name="Shirakawa M."/>
            <person name="Hiroaki H."/>
        </authorList>
    </citation>
    <scope>INTERACTION WITH NCL/NUCLEOLIN</scope>
</reference>
<reference key="12">
    <citation type="journal article" date="2011" name="Sci. Signal.">
        <title>System-wide temporal characterization of the proteome and phosphoproteome of human embryonic stem cell differentiation.</title>
        <authorList>
            <person name="Rigbolt K.T."/>
            <person name="Prokhorova T.A."/>
            <person name="Akimov V."/>
            <person name="Henningsen J."/>
            <person name="Johansen P.T."/>
            <person name="Kratchmarova I."/>
            <person name="Kassem M."/>
            <person name="Mann M."/>
            <person name="Olsen J.V."/>
            <person name="Blagoev B."/>
        </authorList>
    </citation>
    <scope>PHOSPHORYLATION [LARGE SCALE ANALYSIS] AT SER-211</scope>
    <scope>IDENTIFICATION BY MASS SPECTROMETRY [LARGE SCALE ANALYSIS]</scope>
</reference>
<reference key="13">
    <citation type="journal article" date="2012" name="Biochem. Biophys. Res. Commun.">
        <title>The AAA-ATPase NVL2 is a telomerase component essential for holoenzyme assembly.</title>
        <authorList>
            <person name="Her J."/>
            <person name="Chung I.K."/>
        </authorList>
    </citation>
    <scope>FUNCTION</scope>
    <scope>SUBCELLULAR LOCATION</scope>
    <scope>INTERACTION WITH TERT</scope>
    <scope>MUTAGENESIS OF LYS-311 AND LYS-628</scope>
    <scope>ATP-BINDING</scope>
</reference>
<reference key="14">
    <citation type="journal article" date="2013" name="J. Proteome Res.">
        <title>Toward a comprehensive characterization of a human cancer cell phosphoproteome.</title>
        <authorList>
            <person name="Zhou H."/>
            <person name="Di Palma S."/>
            <person name="Preisinger C."/>
            <person name="Peng M."/>
            <person name="Polat A.N."/>
            <person name="Heck A.J."/>
            <person name="Mohammed S."/>
        </authorList>
    </citation>
    <scope>PHOSPHORYLATION [LARGE SCALE ANALYSIS] AT SER-134 AND THR-138</scope>
    <scope>IDENTIFICATION BY MASS SPECTROMETRY [LARGE SCALE ANALYSIS]</scope>
    <source>
        <tissue>Cervix carcinoma</tissue>
        <tissue>Erythroleukemia</tissue>
    </source>
</reference>
<reference key="15">
    <citation type="journal article" date="2015" name="Biochem. Biophys. Res. Commun.">
        <title>NVL2, a nucleolar AAA-ATPase, is associated with the nuclear exosome and is involved in pre-rRNA processing.</title>
        <authorList>
            <person name="Yoshikatsu Y."/>
            <person name="Ishida Y."/>
            <person name="Sudo H."/>
            <person name="Yuasa K."/>
            <person name="Tsuji A."/>
            <person name="Nagahama M."/>
        </authorList>
    </citation>
    <scope>FUNCTION</scope>
    <scope>MUTAGENESIS OF GLU-365; LYS-628 AND GLU-682</scope>
    <scope>INTERACTION WITH MTREX</scope>
</reference>
<reference key="16">
    <citation type="journal article" date="2015" name="Biochem. Biophys. Res. Commun.">
        <title>AAA-ATPase NVL2 acts on MTR4-exosome complex to dissociate the nucleolar protein WDR74.</title>
        <authorList>
            <person name="Hiraishi N."/>
            <person name="Ishida Y."/>
            <person name="Nagahama M."/>
        </authorList>
    </citation>
    <scope>FUNCTION</scope>
    <scope>SUBCELLULAR LOCATION</scope>
    <scope>MUTAGENESIS OF GLU-365 AND GLU-682</scope>
</reference>
<reference key="17">
    <citation type="journal article" date="2017" name="Nat. Struct. Mol. Biol.">
        <title>Site-specific mapping of the human SUMO proteome reveals co-modification with phosphorylation.</title>
        <authorList>
            <person name="Hendriks I.A."/>
            <person name="Lyon D."/>
            <person name="Young C."/>
            <person name="Jensen L.J."/>
            <person name="Vertegaal A.C."/>
            <person name="Nielsen M.L."/>
        </authorList>
    </citation>
    <scope>SUMOYLATION [LARGE SCALE ANALYSIS] AT LYS-208</scope>
    <scope>IDENTIFICATION BY MASS SPECTROMETRY [LARGE SCALE ANALYSIS]</scope>
</reference>
<reference key="18">
    <citation type="journal article" date="2017" name="Structure">
        <title>Structural Analysis Reveals Features of Ribosome Assembly Factor Nsa1/WDR74 Important for Localization and Interaction with Rix7/NVL2.</title>
        <authorList>
            <person name="Lo Y.H."/>
            <person name="Romes E.M."/>
            <person name="Pillon M.C."/>
            <person name="Sobhany M."/>
            <person name="Stanley R.E."/>
        </authorList>
    </citation>
    <scope>FUNCTION</scope>
    <scope>INTERACTION WITH WDR74</scope>
    <scope>MUTAGENESIS OF GLU-365 AND GLU-682</scope>
</reference>
<reference key="19">
    <citation type="journal article" date="2018" name="Biochem. Biophys. Res. Commun.">
        <title>WDR74 participates in an early cleavage of the pre-rRNA processing pathway in cooperation with the nucleolar AAA-ATPase NVL2.</title>
        <authorList>
            <person name="Hiraishi N."/>
            <person name="Ishida Y.I."/>
            <person name="Sudo H."/>
            <person name="Nagahama M."/>
        </authorList>
    </citation>
    <scope>FUNCTION</scope>
    <scope>MUTAGENESIS OF GLU-365 AND GLU-682</scope>
</reference>
<reference key="20">
    <citation type="submission" date="2010-03" db="PDB data bank">
        <title>Human nuclear valosin containing protein like (NVL), C-terminal AAA-ATPase domain.</title>
        <authorList>
            <consortium name="Structural genomics consortium (SGC)"/>
        </authorList>
    </citation>
    <scope>X-RAY CRYSTALLOGRAPHY (2.6 ANGSTROMS) OF 574-845 IN COMPLEX WITH PHOSPHATE</scope>
</reference>
<reference evidence="21" key="21">
    <citation type="journal article" date="2019" name="Nat. Commun.">
        <title>The MTR4 helicase recruits nuclear adaptors of the human RNA exosome using distinct arch-interacting motifs.</title>
        <authorList>
            <person name="Lingaraju M."/>
            <person name="Johnsen D."/>
            <person name="Schlundt A."/>
            <person name="Langer L.M."/>
            <person name="Basquin J."/>
            <person name="Sattler M."/>
            <person name="Heick Jensen T."/>
            <person name="Falk S."/>
            <person name="Conti E."/>
        </authorList>
    </citation>
    <scope>X-RAY CRYSTALLOGRAPHY (3.07 ANGSTROMS) OF 167-216 IN COMPLEXES WITH MTREX AND ATP</scope>
    <scope>INTERACTION WITH MTREX</scope>
    <scope>MUTAGENESIS OF TRP-173; ILE-175 AND ASP-176</scope>
</reference>
<comment type="function">
    <text evidence="4 5 7 8 9 10 11">Participates in the assembly of the telomerase holoenzyme and effecting of telomerase activity via its interaction with TERT (PubMed:22226966). Involved in both early and late stages of the pre-rRNA processing pathways (PubMed:26166824). Spatiotemporally regulates 60S ribosomal subunit biogenesis in the nucleolus (PubMed:15469983, PubMed:16782053, PubMed:26456651, PubMed:29107693). Catalyzes the release of specific assembly factors, such as WDR74, from pre-60S ribosomal particles through the ATPase activity (PubMed:26456651, PubMed:28416111, PubMed:29107693).</text>
</comment>
<comment type="subunit">
    <text evidence="4 5 6 7 8 10 12">Interacts with NCL/nucleolin (PubMed:21474449). Isoform 1 and isoform 2 interact with TERT and isoform 1 exhibits a higher binding affinity for TERT compared to isoform 2 (PubMed:22226966). Isoform 1 interacts with MTREX in an ATP-dependent manner; the interaction is required to associate NVL with nuclear RNA exosome (PubMed:16782053, PubMed:26166824, PubMed:31358741). Isoform 1 interacts with RPL5 in an ATP-dependent manner (PubMed:15469983). Interacts with WDR74 (through WDR repeats); the interaction is independent of RNA or pre-60S ribosome particles (PubMed:28416111).</text>
</comment>
<comment type="interaction">
    <interactant intactId="EBI-18577082">
        <id>O15381-5</id>
    </interactant>
    <interactant intactId="EBI-930964">
        <id>P54253</id>
        <label>ATXN1</label>
    </interactant>
    <organismsDiffer>false</organismsDiffer>
    <experiments>3</experiments>
</comment>
<comment type="interaction">
    <interactant intactId="EBI-18577082">
        <id>O15381-5</id>
    </interactant>
    <interactant intactId="EBI-25840379">
        <id>Q14203-5</id>
        <label>DCTN1</label>
    </interactant>
    <organismsDiffer>false</organismsDiffer>
    <experiments>3</experiments>
</comment>
<comment type="interaction">
    <interactant intactId="EBI-18577082">
        <id>O15381-5</id>
    </interactant>
    <interactant intactId="EBI-750300">
        <id>Q01658</id>
        <label>DR1</label>
    </interactant>
    <organismsDiffer>false</organismsDiffer>
    <experiments>3</experiments>
</comment>
<comment type="interaction">
    <interactant intactId="EBI-18577082">
        <id>O15381-5</id>
    </interactant>
    <interactant intactId="EBI-389564">
        <id>Q00403</id>
        <label>GTF2B</label>
    </interactant>
    <organismsDiffer>false</organismsDiffer>
    <experiments>3</experiments>
</comment>
<comment type="interaction">
    <interactant intactId="EBI-18577082">
        <id>O15381-5</id>
    </interactant>
    <interactant intactId="EBI-1054873">
        <id>Q9Y5Q9</id>
        <label>GTF3C3</label>
    </interactant>
    <organismsDiffer>false</organismsDiffer>
    <experiments>3</experiments>
</comment>
<comment type="interaction">
    <interactant intactId="EBI-18577082">
        <id>O15381-5</id>
    </interactant>
    <interactant intactId="EBI-352682">
        <id>P04792</id>
        <label>HSPB1</label>
    </interactant>
    <organismsDiffer>false</organismsDiffer>
    <experiments>3</experiments>
</comment>
<comment type="interaction">
    <interactant intactId="EBI-18577082">
        <id>O15381-5</id>
    </interactant>
    <interactant intactId="EBI-517086">
        <id>O43464</id>
        <label>HTRA2</label>
    </interactant>
    <organismsDiffer>false</organismsDiffer>
    <experiments>3</experiments>
</comment>
<comment type="interaction">
    <interactant intactId="EBI-18577082">
        <id>O15381-5</id>
    </interactant>
    <interactant intactId="EBI-10975473">
        <id>O60333-2</id>
        <label>KIF1B</label>
    </interactant>
    <organismsDiffer>false</organismsDiffer>
    <experiments>3</experiments>
</comment>
<comment type="interaction">
    <interactant intactId="EBI-18577082">
        <id>O15381-5</id>
    </interactant>
    <interactant intactId="EBI-713665">
        <id>P19404</id>
        <label>NDUFV2</label>
    </interactant>
    <organismsDiffer>false</organismsDiffer>
    <experiments>3</experiments>
</comment>
<comment type="interaction">
    <interactant intactId="EBI-18577082">
        <id>O15381-5</id>
    </interactant>
    <interactant intactId="EBI-1014514">
        <id>P35240-4</id>
        <label>NF2</label>
    </interactant>
    <organismsDiffer>false</organismsDiffer>
    <experiments>3</experiments>
</comment>
<comment type="interaction">
    <interactant intactId="EBI-18577082">
        <id>O15381-5</id>
    </interactant>
    <interactant intactId="EBI-1391623">
        <id>P29474</id>
        <label>NOS3</label>
    </interactant>
    <organismsDiffer>false</organismsDiffer>
    <experiments>3</experiments>
</comment>
<comment type="interaction">
    <interactant intactId="EBI-18577082">
        <id>O15381-5</id>
    </interactant>
    <interactant intactId="EBI-50433196">
        <id>A0A6Q8PF08</id>
        <label>PMP22</label>
    </interactant>
    <organismsDiffer>false</organismsDiffer>
    <experiments>3</experiments>
</comment>
<comment type="interaction">
    <interactant intactId="EBI-18577082">
        <id>O15381-5</id>
    </interactant>
    <interactant intactId="EBI-752074">
        <id>P41219</id>
        <label>PRPH</label>
    </interactant>
    <organismsDiffer>false</organismsDiffer>
    <experiments>3</experiments>
</comment>
<comment type="interaction">
    <interactant intactId="EBI-18577082">
        <id>O15381-5</id>
    </interactant>
    <interactant intactId="EBI-749195">
        <id>P60891</id>
        <label>PRPS1</label>
    </interactant>
    <organismsDiffer>false</organismsDiffer>
    <experiments>3</experiments>
</comment>
<comment type="interaction">
    <interactant intactId="EBI-18577082">
        <id>O15381-5</id>
    </interactant>
    <interactant intactId="EBI-396669">
        <id>Q9Y3C5</id>
        <label>RNF11</label>
    </interactant>
    <organismsDiffer>false</organismsDiffer>
    <experiments>3</experiments>
</comment>
<comment type="interaction">
    <interactant intactId="EBI-18577082">
        <id>O15381-5</id>
    </interactant>
    <interactant intactId="EBI-2340927">
        <id>P78317</id>
        <label>RNF4</label>
    </interactant>
    <organismsDiffer>false</organismsDiffer>
    <experiments>3</experiments>
</comment>
<comment type="interaction">
    <interactant intactId="EBI-18577082">
        <id>O15381-5</id>
    </interactant>
    <interactant intactId="EBI-985879">
        <id>P37840</id>
        <label>SNCA</label>
    </interactant>
    <organismsDiffer>false</organismsDiffer>
    <experiments>3</experiments>
</comment>
<comment type="interaction">
    <interactant intactId="EBI-18577082">
        <id>O15381-5</id>
    </interactant>
    <interactant intactId="EBI-372899">
        <id>Q13148</id>
        <label>TARDBP</label>
    </interactant>
    <organismsDiffer>false</organismsDiffer>
    <experiments>6</experiments>
</comment>
<comment type="interaction">
    <interactant intactId="EBI-18577082">
        <id>O15381-5</id>
    </interactant>
    <interactant intactId="EBI-714860">
        <id>P09936</id>
        <label>UCHL1</label>
    </interactant>
    <organismsDiffer>false</organismsDiffer>
    <experiments>3</experiments>
</comment>
<comment type="interaction">
    <interactant intactId="EBI-18577082">
        <id>O15381-5</id>
    </interactant>
    <interactant intactId="EBI-720609">
        <id>O76024</id>
        <label>WFS1</label>
    </interactant>
    <organismsDiffer>false</organismsDiffer>
    <experiments>3</experiments>
</comment>
<comment type="subcellular location">
    <molecule>Isoform 2</molecule>
    <subcellularLocation>
        <location evidence="4">Nucleus</location>
        <location evidence="4">Nucleoplasm</location>
    </subcellularLocation>
</comment>
<comment type="subcellular location">
    <molecule>Isoform 1</molecule>
    <subcellularLocation>
        <location evidence="3 4 7 9 13">Nucleus</location>
        <location evidence="3 4 7 9 13">Nucleolus</location>
    </subcellularLocation>
    <subcellularLocation>
        <location evidence="4">Nucleus</location>
        <location evidence="4">Nucleoplasm</location>
    </subcellularLocation>
    <text evidence="5">Expressed predominantly in the nucleolus. Associates with pre-ribosomal particles in the nucleus.</text>
</comment>
<comment type="alternative products">
    <event type="alternative splicing"/>
    <isoform>
        <id>O15381-1</id>
        <name>1</name>
        <name>NVLp.2</name>
        <sequence type="displayed"/>
    </isoform>
    <isoform>
        <id>O15381-2</id>
        <name>2</name>
        <name>NVLp.1</name>
        <sequence type="described" ref="VSP_007771"/>
    </isoform>
    <isoform>
        <id>O15381-3</id>
        <name>3</name>
        <sequence type="described" ref="VSP_007771 VSP_007772"/>
    </isoform>
    <isoform>
        <id>O15381-4</id>
        <name>4</name>
        <sequence type="described" ref="VSP_045334 VSP_045335"/>
    </isoform>
    <isoform>
        <id>O15381-5</id>
        <name>5</name>
        <sequence type="described" ref="VSP_007772"/>
    </isoform>
</comment>
<comment type="tissue specificity">
    <text evidence="13">Widely expressed. Highest level of expression in heart, placenta, skeletal muscle, pancreas and retina.</text>
</comment>
<comment type="similarity">
    <text evidence="18">Belongs to the AAA ATPase family.</text>
</comment>
<proteinExistence type="evidence at protein level"/>
<name>NVL_HUMAN</name>
<accession>O15381</accession>
<accession>B4DMC4</accession>
<accession>B4DP98</accession>
<accession>Q96EM7</accession>
<keyword id="KW-0002">3D-structure</keyword>
<keyword id="KW-0007">Acetylation</keyword>
<keyword id="KW-0025">Alternative splicing</keyword>
<keyword id="KW-0067">ATP-binding</keyword>
<keyword id="KW-1017">Isopeptide bond</keyword>
<keyword id="KW-0547">Nucleotide-binding</keyword>
<keyword id="KW-0539">Nucleus</keyword>
<keyword id="KW-0597">Phosphoprotein</keyword>
<keyword id="KW-1267">Proteomics identification</keyword>
<keyword id="KW-1185">Reference proteome</keyword>
<keyword id="KW-0677">Repeat</keyword>
<keyword id="KW-0690">Ribosome biogenesis</keyword>
<keyword id="KW-0832">Ubl conjugation</keyword>
<evidence type="ECO:0000250" key="1">
    <source>
        <dbReference type="UniProtKB" id="Q9DBY8"/>
    </source>
</evidence>
<evidence type="ECO:0000256" key="2">
    <source>
        <dbReference type="SAM" id="MobiDB-lite"/>
    </source>
</evidence>
<evidence type="ECO:0000269" key="3">
    <source>
    </source>
</evidence>
<evidence type="ECO:0000269" key="4">
    <source>
    </source>
</evidence>
<evidence type="ECO:0000269" key="5">
    <source>
    </source>
</evidence>
<evidence type="ECO:0000269" key="6">
    <source>
    </source>
</evidence>
<evidence type="ECO:0000269" key="7">
    <source>
    </source>
</evidence>
<evidence type="ECO:0000269" key="8">
    <source>
    </source>
</evidence>
<evidence type="ECO:0000269" key="9">
    <source>
    </source>
</evidence>
<evidence type="ECO:0000269" key="10">
    <source>
    </source>
</evidence>
<evidence type="ECO:0000269" key="11">
    <source>
    </source>
</evidence>
<evidence type="ECO:0000269" key="12">
    <source>
    </source>
</evidence>
<evidence type="ECO:0000269" key="13">
    <source>
    </source>
</evidence>
<evidence type="ECO:0000303" key="14">
    <source>
    </source>
</evidence>
<evidence type="ECO:0000303" key="15">
    <source>
    </source>
</evidence>
<evidence type="ECO:0000303" key="16">
    <source>
    </source>
</evidence>
<evidence type="ECO:0000303" key="17">
    <source>
    </source>
</evidence>
<evidence type="ECO:0000305" key="18"/>
<evidence type="ECO:0000305" key="19">
    <source>
    </source>
</evidence>
<evidence type="ECO:0000312" key="20">
    <source>
        <dbReference type="HGNC" id="HGNC:8070"/>
    </source>
</evidence>
<evidence type="ECO:0007744" key="21">
    <source>
        <dbReference type="PDB" id="6RO1"/>
    </source>
</evidence>
<evidence type="ECO:0007744" key="22">
    <source>
    </source>
</evidence>
<evidence type="ECO:0007744" key="23">
    <source>
    </source>
</evidence>
<evidence type="ECO:0007744" key="24">
    <source>
    </source>
</evidence>
<evidence type="ECO:0007744" key="25">
    <source>
    </source>
</evidence>
<evidence type="ECO:0007744" key="26">
    <source>
    </source>
</evidence>
<evidence type="ECO:0007829" key="27">
    <source>
        <dbReference type="PDB" id="2X8A"/>
    </source>
</evidence>
<evidence type="ECO:0007829" key="28">
    <source>
        <dbReference type="PDB" id="6RO1"/>
    </source>
</evidence>
<organism>
    <name type="scientific">Homo sapiens</name>
    <name type="common">Human</name>
    <dbReference type="NCBI Taxonomy" id="9606"/>
    <lineage>
        <taxon>Eukaryota</taxon>
        <taxon>Metazoa</taxon>
        <taxon>Chordata</taxon>
        <taxon>Craniata</taxon>
        <taxon>Vertebrata</taxon>
        <taxon>Euteleostomi</taxon>
        <taxon>Mammalia</taxon>
        <taxon>Eutheria</taxon>
        <taxon>Euarchontoglires</taxon>
        <taxon>Primates</taxon>
        <taxon>Haplorrhini</taxon>
        <taxon>Catarrhini</taxon>
        <taxon>Hominidae</taxon>
        <taxon>Homo</taxon>
    </lineage>
</organism>
<protein>
    <recommendedName>
        <fullName evidence="18">Nuclear valosin-containing protein-like</fullName>
        <shortName>NVLp</shortName>
        <shortName>Nuclear VCP-like protein</shortName>
    </recommendedName>
</protein>